<feature type="chain" id="PRO_0000458985" description="Nucleoside transporter 1">
    <location>
        <begin position="1"/>
        <end position="422"/>
    </location>
</feature>
<feature type="topological domain" description="Cytoplasmic" evidence="16">
    <location>
        <begin position="1"/>
        <end position="38"/>
    </location>
</feature>
<feature type="transmembrane region" description="Helical" evidence="9 21">
    <location>
        <begin position="39"/>
        <end position="59"/>
    </location>
</feature>
<feature type="topological domain" description="Extracellular" evidence="16">
    <location>
        <begin position="60"/>
        <end position="63"/>
    </location>
</feature>
<feature type="transmembrane region" description="Helical" evidence="9 21">
    <location>
        <begin position="64"/>
        <end position="82"/>
    </location>
</feature>
<feature type="topological domain" description="Cytoplasmic" evidence="16">
    <location>
        <begin position="83"/>
        <end position="87"/>
    </location>
</feature>
<feature type="transmembrane region" description="Helical" evidence="9 21">
    <location>
        <begin position="88"/>
        <end position="107"/>
    </location>
</feature>
<feature type="topological domain" description="Extracellular" evidence="16">
    <location>
        <begin position="108"/>
        <end position="116"/>
    </location>
</feature>
<feature type="transmembrane region" description="Helical" evidence="9 21">
    <location>
        <begin position="117"/>
        <end position="139"/>
    </location>
</feature>
<feature type="topological domain" description="Cytoplasmic" evidence="16">
    <location>
        <begin position="140"/>
        <end position="149"/>
    </location>
</feature>
<feature type="transmembrane region" description="Helical" evidence="9 21">
    <location>
        <begin position="150"/>
        <end position="174"/>
    </location>
</feature>
<feature type="topological domain" description="Extracellular" evidence="16">
    <location>
        <begin position="175"/>
        <end position="185"/>
    </location>
</feature>
<feature type="transmembrane region" description="Helical" evidence="9 21">
    <location>
        <begin position="186"/>
        <end position="208"/>
    </location>
</feature>
<feature type="topological domain" description="Cytoplasmic" evidence="16">
    <location>
        <begin position="209"/>
        <end position="241"/>
    </location>
</feature>
<feature type="transmembrane region" description="Helical" evidence="9 21">
    <location>
        <begin position="242"/>
        <end position="265"/>
    </location>
</feature>
<feature type="topological domain" description="Extracellular" evidence="16">
    <location>
        <begin position="266"/>
        <end position="274"/>
    </location>
</feature>
<feature type="transmembrane region" description="Helical" evidence="9 21">
    <location>
        <begin position="275"/>
        <end position="294"/>
    </location>
</feature>
<feature type="topological domain" description="Cytoplasmic" evidence="16">
    <location>
        <begin position="295"/>
        <end position="309"/>
    </location>
</feature>
<feature type="transmembrane region" description="Helical" evidence="9 21">
    <location>
        <begin position="310"/>
        <end position="330"/>
    </location>
</feature>
<feature type="topological domain" description="Extracellular" evidence="16">
    <location>
        <begin position="331"/>
        <end position="338"/>
    </location>
</feature>
<feature type="transmembrane region" description="Helical" evidence="9 21">
    <location>
        <begin position="339"/>
        <end position="362"/>
    </location>
</feature>
<feature type="topological domain" description="Cytoplasmic" evidence="16">
    <location>
        <begin position="363"/>
        <end position="374"/>
    </location>
</feature>
<feature type="transmembrane region" description="Helical" evidence="1">
    <location>
        <begin position="375"/>
        <end position="397"/>
    </location>
</feature>
<feature type="topological domain" description="Extracellular" evidence="16">
    <location>
        <begin position="398"/>
        <end position="422"/>
    </location>
</feature>
<feature type="binding site" evidence="9 20">
    <location>
        <position position="53"/>
    </location>
    <ligand>
        <name>inosine</name>
        <dbReference type="ChEBI" id="CHEBI:17596"/>
    </ligand>
</feature>
<feature type="binding site" evidence="9 20">
    <location>
        <position position="135"/>
    </location>
    <ligand>
        <name>inosine</name>
        <dbReference type="ChEBI" id="CHEBI:17596"/>
    </ligand>
</feature>
<feature type="binding site" evidence="9 20">
    <location>
        <position position="287"/>
    </location>
    <ligand>
        <name>inosine</name>
        <dbReference type="ChEBI" id="CHEBI:17596"/>
    </ligand>
</feature>
<feature type="binding site" evidence="9 20">
    <location>
        <position position="291"/>
    </location>
    <ligand>
        <name>inosine</name>
        <dbReference type="ChEBI" id="CHEBI:17596"/>
    </ligand>
</feature>
<feature type="sequence variant" description="No significant effects on affinity for hypoxanthine, inosine, adenine or adenosine. No significant effects on affinity for hypoxanthine, inosine, adenine or adenosine; when associated with I-129." evidence="8">
    <original>F</original>
    <variation>S</variation>
    <location>
        <position position="36"/>
    </location>
</feature>
<feature type="sequence variant" description="No significant effects on affinity for hypoxanthine, inosine, adenine or adenosine." evidence="8">
    <original>F</original>
    <variation>I</variation>
    <location>
        <position position="92"/>
    </location>
</feature>
<feature type="sequence variant" description="No significant effects on affinity for hypoxanthine, inosine, adenine or adenosine; when associated with S-36 or F-133." evidence="8">
    <original>V</original>
    <variation>I</variation>
    <location>
        <position position="129"/>
    </location>
</feature>
<feature type="sequence variant" description="No significant effects on affinity for hypoxanthine, inosine, adenine or adenosine; when associated with I-129." evidence="8">
    <original>L</original>
    <variation>F</variation>
    <location>
        <position position="133"/>
    </location>
</feature>
<feature type="sequence variant" description="Modestly increases affinity for adenine; no significant effects on affinity for hypoxanthine, inosine or adenosine." evidence="8">
    <original>L</original>
    <variation>F</variation>
    <location>
        <position position="197"/>
    </location>
</feature>
<feature type="sequence variant" description="Modestly decreases affinity for hypoxanthine and adenine; no significant effects on affinity for inosine or adenosine." evidence="8">
    <original>Q</original>
    <variation>E</variation>
    <location>
        <position position="284"/>
    </location>
</feature>
<feature type="sequence variant" description="No significant effects on affinity for hypoxanthine, inosine, adenine or adenosine." evidence="8">
    <original>S</original>
    <variation>T</variation>
    <location>
        <position position="317"/>
    </location>
</feature>
<feature type="sequence variant" description="No significant effects on affinity for hypoxanthine, inosine, adenine or adenosine." evidence="8">
    <original>V</original>
    <variation>I</variation>
    <location>
        <position position="345"/>
    </location>
</feature>
<feature type="sequence variant" description="Modestly decreases affinity for hypoxanthine and adenine; no significant effects on affinity for inosine or adenosine." evidence="8">
    <original>A</original>
    <variation>S</variation>
    <location>
        <position position="351"/>
    </location>
</feature>
<feature type="sequence variant" description="No significant effects on affinity for hypoxanthine, inosine, adenine or adenosine." evidence="8">
    <original>L</original>
    <variation>I</variation>
    <location>
        <position position="385"/>
    </location>
</feature>
<feature type="sequence variant" description="Modestly decreases affinity for hypoxanthine and adenine; no significant effects on affinity for inosine or adenosine." evidence="8">
    <original>F</original>
    <variation>L</variation>
    <location>
        <position position="394"/>
    </location>
</feature>
<feature type="sequence variant" description="No significant effects on affinity for hypoxanthine, inosine, adenine or adenosine." evidence="8">
    <original>I</original>
    <variation>M</variation>
    <location>
        <position position="418"/>
    </location>
</feature>
<feature type="mutagenesis site" description="No significant growth defects in adenosine-dependent proliferation assay when transporter expressed in purine auxotrophic yeast strain." evidence="10">
    <original>S</original>
    <variation>C</variation>
    <location>
        <position position="48"/>
    </location>
</feature>
<feature type="mutagenesis site" description="Abolishes inosine binding." evidence="9">
    <original>S</original>
    <variation>A</variation>
    <location>
        <position position="49"/>
    </location>
</feature>
<feature type="mutagenesis site" description="No significant growth defects in adenosine-dependent proliferation assay when transporter expressed in purine auxotrophic yeast strain." evidence="10">
    <original>S</original>
    <variation>C</variation>
    <location>
        <position position="49"/>
    </location>
</feature>
<feature type="mutagenesis site" description="Reduces the binding affinity of GSK4 inhibitor." evidence="9">
    <original>L</original>
    <variation>A</variation>
    <location>
        <position position="50"/>
    </location>
</feature>
<feature type="mutagenesis site" description="Results in growth defects in adenosine-dependent proliferation assay when transporter expressed in purine auxotrophic yeast strain. Abolishes adenosine and uridine transport." evidence="10">
    <original>L</original>
    <variation>C</variation>
    <location>
        <position position="50"/>
    </location>
</feature>
<feature type="mutagenesis site" description="No significant growth defects in adenosine-dependent proliferation assay when transporter expressed in purine auxotrophic yeast strain." evidence="10">
    <original>N</original>
    <variation>C</variation>
    <location>
        <position position="51"/>
    </location>
</feature>
<feature type="mutagenesis site" description="No significant growth defects in adenosine-dependent proliferation assay when transporter expressed in purine auxotrophic yeast strain." evidence="10">
    <original>V</original>
    <variation>C</variation>
    <location>
        <position position="52"/>
    </location>
</feature>
<feature type="mutagenesis site" description="Reduces inosine binding and abolishes transport activity. Abolishes the GSK4 inhibitor binding." evidence="9">
    <original>W</original>
    <variation>A</variation>
    <location>
        <position position="53"/>
    </location>
</feature>
<feature type="mutagenesis site" description="Results in severe growth defects in adenosine-dependent proliferation assay when transporter expressed in purine auxotrophic yeast strain." evidence="10">
    <original>W</original>
    <variation>C</variation>
    <location>
        <position position="53"/>
    </location>
</feature>
<feature type="mutagenesis site" description="Reduces the binding affinity of GSK4 inhibitor." evidence="9">
    <original>L</original>
    <variation>A</variation>
    <location>
        <position position="73"/>
    </location>
</feature>
<feature type="mutagenesis site" description="No significant growth defects in adenosine-dependent proliferation assay when transporter expressed in purine auxotrophic yeast strain." evidence="10">
    <original>A</original>
    <variation>C</variation>
    <location>
        <position position="134"/>
    </location>
</feature>
<feature type="mutagenesis site" description="Abolishes inosine binding and transport activity. Reduces the binding affinity of GSK4 inhibitor." evidence="9">
    <original>Q</original>
    <variation>A</variation>
    <location>
        <position position="135"/>
    </location>
</feature>
<feature type="mutagenesis site" description="Results in severe growth defects in adenosine-dependent proliferation assay when transporter expressed in purine auxotrophic yeast strain. Abolishes adenosine and uridine transport." evidence="10">
    <original>Q</original>
    <variation>C</variation>
    <location>
        <position position="135"/>
    </location>
</feature>
<feature type="mutagenesis site" description="No significant growth defects in adenosine-dependent proliferation assay when transporter expressed in purine auxotrophic yeast strain." evidence="10">
    <original>T</original>
    <variation>C</variation>
    <location>
        <position position="136"/>
    </location>
</feature>
<feature type="mutagenesis site" description="No significant growth defects in adenosine-dependent proliferation assay when transporter expressed in purine auxotrophic yeast strain." evidence="10">
    <original>I</original>
    <variation>C</variation>
    <location>
        <position position="137"/>
    </location>
</feature>
<feature type="mutagenesis site" description="Reduces the binding affinity of GSK4 inhibitor." evidence="9">
    <original>F</original>
    <variation>A</variation>
    <location>
        <position position="139"/>
    </location>
</feature>
<feature type="mutagenesis site" description="No significant effects on inosine binding and transport activity." evidence="9">
    <original>Y</original>
    <variation>A</variation>
    <location>
        <position position="190"/>
    </location>
</feature>
<feature type="mutagenesis site" description="Results in severe growth defects in adenosine-dependent proliferation assay when transporter expressed in purine auxotrophic yeast strain." evidence="10">
    <original>F</original>
    <variation>C</variation>
    <location>
        <position position="286"/>
    </location>
</feature>
<feature type="mutagenesis site" description="Abolishes inosine binding and transport activity." evidence="9">
    <original>D</original>
    <variation>A</variation>
    <location>
        <position position="287"/>
    </location>
</feature>
<feature type="mutagenesis site" description="Results in severe growth defects in adenosine-dependent proliferation assay when transporter expressed in purine auxotrophic yeast strain. Abolishes adenosine and uridine transport." evidence="10">
    <original>D</original>
    <variation>C</variation>
    <location>
        <position position="287"/>
    </location>
</feature>
<feature type="mutagenesis site" description="No significant growth defects in adenosine-dependent proliferation assay when transporter expressed in purine auxotrophic yeast strain." evidence="10">
    <original>F</original>
    <variation>C</variation>
    <location>
        <position position="288"/>
    </location>
</feature>
<feature type="mutagenesis site" description="No significant growth defects in adenosine-dependent proliferation assay when transporter expressed in purine auxotrophic yeast strain." evidence="10">
    <original>L</original>
    <variation>C</variation>
    <location>
        <position position="289"/>
    </location>
</feature>
<feature type="mutagenesis site" description="Results in severe growth defects in adenosine-dependent proliferation assay when transporter expressed in purine auxotrophic yeast strain." evidence="10">
    <original>S</original>
    <variation>C</variation>
    <location>
        <position position="290"/>
    </location>
</feature>
<feature type="mutagenesis site" description="Abolishes transport activity while maintaining inosine binding." evidence="9">
    <original>R</original>
    <variation>A</variation>
    <location>
        <position position="291"/>
    </location>
</feature>
<feature type="mutagenesis site" description="Results in severe growth defects in adenosine-dependent proliferation assay when transporter expressed in purine auxotrophic yeast strain. Abolishes adenosine and uridine transport." evidence="10">
    <original>R</original>
    <variation>C</variation>
    <location>
        <position position="291"/>
    </location>
</feature>
<feature type="mutagenesis site" description="Reduces the binding affinity of GSK4 inhibitor." evidence="9">
    <original>F</original>
    <variation>A</variation>
    <location>
        <position position="390"/>
    </location>
</feature>
<feature type="helix" evidence="22">
    <location>
        <begin position="32"/>
        <end position="58"/>
    </location>
</feature>
<feature type="helix" evidence="22">
    <location>
        <begin position="63"/>
        <end position="82"/>
    </location>
</feature>
<feature type="helix" evidence="22">
    <location>
        <begin position="87"/>
        <end position="89"/>
    </location>
</feature>
<feature type="helix" evidence="22">
    <location>
        <begin position="90"/>
        <end position="110"/>
    </location>
</feature>
<feature type="helix" evidence="22">
    <location>
        <begin position="113"/>
        <end position="143"/>
    </location>
</feature>
<feature type="strand" evidence="22">
    <location>
        <begin position="144"/>
        <end position="147"/>
    </location>
</feature>
<feature type="helix" evidence="22">
    <location>
        <begin position="150"/>
        <end position="174"/>
    </location>
</feature>
<feature type="helix" evidence="22">
    <location>
        <begin position="185"/>
        <end position="209"/>
    </location>
</feature>
<feature type="helix" evidence="22">
    <location>
        <begin position="232"/>
        <end position="238"/>
    </location>
</feature>
<feature type="helix" evidence="22">
    <location>
        <begin position="240"/>
        <end position="256"/>
    </location>
</feature>
<feature type="helix" evidence="22">
    <location>
        <begin position="257"/>
        <end position="261"/>
    </location>
</feature>
<feature type="helix" evidence="22">
    <location>
        <begin position="263"/>
        <end position="269"/>
    </location>
</feature>
<feature type="helix" evidence="22">
    <location>
        <begin position="273"/>
        <end position="289"/>
    </location>
</feature>
<feature type="helix" evidence="22">
    <location>
        <begin position="292"/>
        <end position="295"/>
    </location>
</feature>
<feature type="turn" evidence="22">
    <location>
        <begin position="301"/>
        <end position="304"/>
    </location>
</feature>
<feature type="helix" evidence="22">
    <location>
        <begin position="310"/>
        <end position="318"/>
    </location>
</feature>
<feature type="helix" evidence="22">
    <location>
        <begin position="319"/>
        <end position="321"/>
    </location>
</feature>
<feature type="helix" evidence="22">
    <location>
        <begin position="322"/>
        <end position="331"/>
    </location>
</feature>
<feature type="turn" evidence="22">
    <location>
        <begin position="335"/>
        <end position="337"/>
    </location>
</feature>
<feature type="helix" evidence="22">
    <location>
        <begin position="340"/>
        <end position="368"/>
    </location>
</feature>
<feature type="helix" evidence="22">
    <location>
        <begin position="375"/>
        <end position="399"/>
    </location>
</feature>
<feature type="helix" evidence="22">
    <location>
        <begin position="400"/>
        <end position="404"/>
    </location>
</feature>
<comment type="function">
    <text evidence="2 3 5 6 7 8 9 10">Sodium-independent nucleoside and nucleobase transporter with a broad substrate specificity (PubMed:10744765, PubMed:10861212, PubMed:16751273, PubMed:18639591, PubMed:25602169, PubMed:31876139, PubMed:36977719, PubMed:38113238). Plays a key role in the utilization of host purine sources by P.falciparum during intraerythrocytic development enabling parasite growth in the presence of physiological concentrations of adenosine, inosine, guanine, guanosine, xanthine and hypoxanthine (PubMed:16751273, PubMed:18639591). Essential for parasite transition from ring to trophozoite or from trophozoite to schizont stage but not for erythrocyte invasion by merozoites (PubMed:16751273).</text>
</comment>
<comment type="catalytic activity">
    <reaction evidence="2 3 5 6 9">
        <text>inosine(in) = inosine(out)</text>
        <dbReference type="Rhea" id="RHEA:75375"/>
        <dbReference type="ChEBI" id="CHEBI:17596"/>
    </reaction>
</comment>
<comment type="catalytic activity">
    <reaction evidence="2 3 5 6 7 8 10">
        <text>adenosine(in) = adenosine(out)</text>
        <dbReference type="Rhea" id="RHEA:75343"/>
        <dbReference type="ChEBI" id="CHEBI:16335"/>
    </reaction>
</comment>
<comment type="catalytic activity">
    <reaction evidence="3 6 7">
        <text>hypoxanthine(out) = hypoxanthine(in)</text>
        <dbReference type="Rhea" id="RHEA:71515"/>
        <dbReference type="ChEBI" id="CHEBI:17368"/>
    </reaction>
</comment>
<comment type="catalytic activity">
    <reaction evidence="3 6">
        <text>guanosine(in) = guanosine(out)</text>
        <dbReference type="Rhea" id="RHEA:75371"/>
        <dbReference type="ChEBI" id="CHEBI:16750"/>
    </reaction>
</comment>
<comment type="catalytic activity">
    <reaction evidence="3 6">
        <text>guanine(out) = guanine(in)</text>
        <dbReference type="Rhea" id="RHEA:71531"/>
        <dbReference type="ChEBI" id="CHEBI:16235"/>
    </reaction>
</comment>
<comment type="catalytic activity">
    <reaction evidence="2">
        <text>thymidine(in) = thymidine(out)</text>
        <dbReference type="Rhea" id="RHEA:75363"/>
        <dbReference type="ChEBI" id="CHEBI:17748"/>
    </reaction>
</comment>
<comment type="catalytic activity">
    <reaction evidence="3 8 10">
        <text>uridine(out) = uridine(in)</text>
        <dbReference type="Rhea" id="RHEA:71519"/>
        <dbReference type="ChEBI" id="CHEBI:16704"/>
    </reaction>
</comment>
<comment type="catalytic activity">
    <reaction evidence="3">
        <text>uracil(in) = uracil(out)</text>
        <dbReference type="Rhea" id="RHEA:69404"/>
        <dbReference type="ChEBI" id="CHEBI:17568"/>
    </reaction>
</comment>
<comment type="catalytic activity">
    <reaction evidence="3">
        <text>thymine(out) = thymine(in)</text>
        <dbReference type="Rhea" id="RHEA:71527"/>
        <dbReference type="ChEBI" id="CHEBI:17821"/>
    </reaction>
</comment>
<comment type="catalytic activity">
    <reaction evidence="3">
        <text>adenine(out) = adenine(in)</text>
        <dbReference type="Rhea" id="RHEA:71523"/>
        <dbReference type="ChEBI" id="CHEBI:16708"/>
    </reaction>
</comment>
<comment type="catalytic activity">
    <reaction evidence="3">
        <text>cytosine(out) = cytosine(in)</text>
        <dbReference type="Rhea" id="RHEA:76639"/>
        <dbReference type="ChEBI" id="CHEBI:16040"/>
    </reaction>
</comment>
<comment type="catalytic activity">
    <reaction evidence="6">
        <text>xanthine(out) = xanthine(in)</text>
        <dbReference type="Rhea" id="RHEA:76643"/>
        <dbReference type="ChEBI" id="CHEBI:17712"/>
    </reaction>
</comment>
<comment type="activity regulation">
    <text evidence="2 7 9">GSK4 (5-methyl-N-[2-(2-oxo-1-azepanyl)ethyl]-2-phenyl-1,3-oxazole-4-carbox-amide) disrupts the transport activity at 500 nM (PubMed:36977719). Inhibited partially by 10 uM dipyridamole (PubMed:10744765). Inhibited partially by N,N'-1,3-benzothiazole-2,6-diyldi(2-furamide), 2-bromo-N-(4-[1,3]oxazolo[4,5-b]pyridin-2-ylphenyl)benzamide, 4-methyl-7-[(3,4,5-trimethoxybenzyl)oxy]-2H-chromen-2-one, 2-(1-methyl-1H-indol-3-yl)-2-oxo-N-[4-(pyrrolidin-1-ylcarbonyl)phenyl]acet amide and 2-[2-(2-methylphenyl)vinyl]-4(3H)-quinazolinone (PubMed:25602169).</text>
</comment>
<comment type="biophysicochemical properties">
    <kinetics>
        <KM evidence="2">13.2 uM for adenosine</KM>
        <KM evidence="3">320 uM for adenosine</KM>
        <KM evidence="3">320 uM for adenine</KM>
        <KM evidence="3">410 uM for hypoxanthine</KM>
        <KM evidence="3">3500 uM for uridine</KM>
        <KM evidence="2">253 uM for inosine</KM>
    </kinetics>
</comment>
<comment type="subcellular location">
    <subcellularLocation>
        <location evidence="4 5">Cell membrane</location>
        <topology evidence="1">Multi-pass membrane protein</topology>
    </subcellularLocation>
</comment>
<comment type="developmental stage">
    <text evidence="2 4">Expressed throughout intraerythrocytic life cycle, the level increases significantly from the ring to the early trophozoite stage and remains relatively constant through the late schizont stage (at protein level) (PubMed:11682491). The amount of protein does not coincide with the transcript levels, which are maximal in early trophozoites and subsequently down-regulated in late stage trophozoites and schizonts (PubMed:10744765).</text>
</comment>
<comment type="disruption phenotype">
    <text evidence="5 6 7">Parasites are not viable if adenosine, inosine, guanine, guanosine, xanthine or hypoxanthine are present at concentrations below 50 uM and require higher concentrations of hypoxanthine, adenosine or inosine to progress beyond the ring stage of development (PubMed:16751273, PubMed:18639591). Reduced uptake of hypoxanthine and adenosine (PubMed:25602169). Reduced parasite growth with xanthine as the sole purine source (PubMed:25602169).</text>
</comment>
<comment type="miscellaneous">
    <text evidence="2 3 10">With an efficiency similar to that for uridine, can mediate the cellular uptake of nucleoside analogs used in cancer chemotherapy: fludarabine (9-beta-D-arabinosyl-2-fluoroadenine), cladribine (2-chloro-2'-deoxyadenosine) and gemcitabine (2',2'-difluoro-2'-deoxycytidine) (PubMed:10861212). Unlike the mammalian transporters, can efficiently transport the anti-viral nucleoside analogs: AZT (3'-azido-3'-deoxythymidine), ddC (2',3'-dideoxycytidine) and ddI (2',3'-dideoxyinosine) (PubMed:10861212). In contrast to the human transporter SLC29A1, has low sensitivity to the inhibitor nitrobenzylmercaptopurine riboside (NBMPR) (PubMed:10744765). Can transport 5-fluorouridine (PubMed:38113238).</text>
</comment>
<comment type="similarity">
    <text evidence="16">Belongs to the SLC29A/ENT transporter (TC 2.A.57) family.</text>
</comment>
<organism evidence="18">
    <name type="scientific">Plasmodium falciparum (isolate 3D7)</name>
    <dbReference type="NCBI Taxonomy" id="36329"/>
    <lineage>
        <taxon>Eukaryota</taxon>
        <taxon>Sar</taxon>
        <taxon>Alveolata</taxon>
        <taxon>Apicomplexa</taxon>
        <taxon>Aconoidasida</taxon>
        <taxon>Haemosporida</taxon>
        <taxon>Plasmodiidae</taxon>
        <taxon>Plasmodium</taxon>
        <taxon>Plasmodium (Laverania)</taxon>
    </lineage>
</organism>
<proteinExistence type="evidence at protein level"/>
<gene>
    <name evidence="16" type="primary">NT1</name>
    <name evidence="17" type="ORF">PF3D7_1347200</name>
</gene>
<name>ENT1_PLAF7</name>
<sequence length="422" mass="47631">MSTGKESSKAYADIESRGDYKDDGKKGSTLSSKQHFMLSLTFILIGLSSLNVWNTALGLNINFKYNTFQITGLVCSSIVALFVEIPKIMLPFLLGGLSILCAGFQISHSFFTDTQFDTYCLVAFIVIGVVAGLAQTIAFNIGSTMEDNMGGYMSAGIGISGVFIFVINLLLDQFVSPEKHYGVNKAKLLYLYIICELCLILAIVFCVCNLDLTNKNNKKDEENKENNATLSYMELFKDSYKAILTMFLVNWLTLQLFPGVGHKKWQESHNISDYNVTIIVGMFQVFDFLSRYPPNLTHIKIFKNFTFSLNKLLVANSLRLLFIPWFILNACVDHPFFKNIVQQCVCMAMLAFTNGWFNTVPFLVFVKELKKAKKKKEIEIISTFLVIAMFVGLFCGIWTTYIYNLFNIVLPKPDLPPIDVTQ</sequence>
<keyword id="KW-0002">3D-structure</keyword>
<keyword id="KW-1003">Cell membrane</keyword>
<keyword id="KW-0472">Membrane</keyword>
<keyword id="KW-1185">Reference proteome</keyword>
<keyword id="KW-0812">Transmembrane</keyword>
<keyword id="KW-1133">Transmembrane helix</keyword>
<keyword id="KW-0813">Transport</keyword>
<protein>
    <recommendedName>
        <fullName evidence="17">Nucleoside transporter 1</fullName>
        <shortName evidence="11 12">PfNT1</shortName>
    </recommendedName>
    <alternativeName>
        <fullName evidence="13">Equilibrative nucleoside transporter 1</fullName>
    </alternativeName>
    <alternativeName>
        <fullName evidence="15">Equilibrative nucleoside transporter type 1</fullName>
        <shortName evidence="13 14 15">PfENT1</shortName>
    </alternativeName>
</protein>
<evidence type="ECO:0000255" key="1"/>
<evidence type="ECO:0000269" key="2">
    <source>
    </source>
</evidence>
<evidence type="ECO:0000269" key="3">
    <source>
    </source>
</evidence>
<evidence type="ECO:0000269" key="4">
    <source>
    </source>
</evidence>
<evidence type="ECO:0000269" key="5">
    <source>
    </source>
</evidence>
<evidence type="ECO:0000269" key="6">
    <source>
    </source>
</evidence>
<evidence type="ECO:0000269" key="7">
    <source>
    </source>
</evidence>
<evidence type="ECO:0000269" key="8">
    <source>
    </source>
</evidence>
<evidence type="ECO:0000269" key="9">
    <source>
    </source>
</evidence>
<evidence type="ECO:0000269" key="10">
    <source>
    </source>
</evidence>
<evidence type="ECO:0000303" key="11">
    <source>
    </source>
</evidence>
<evidence type="ECO:0000303" key="12">
    <source>
    </source>
</evidence>
<evidence type="ECO:0000303" key="13">
    <source>
    </source>
</evidence>
<evidence type="ECO:0000303" key="14">
    <source>
    </source>
</evidence>
<evidence type="ECO:0000303" key="15">
    <source>
    </source>
</evidence>
<evidence type="ECO:0000305" key="16"/>
<evidence type="ECO:0000312" key="17">
    <source>
        <dbReference type="EMBL" id="CAD52595.1"/>
    </source>
</evidence>
<evidence type="ECO:0000312" key="18">
    <source>
        <dbReference type="Proteomes" id="UP000001450"/>
    </source>
</evidence>
<evidence type="ECO:0007744" key="19">
    <source>
        <dbReference type="PDB" id="7WN0"/>
    </source>
</evidence>
<evidence type="ECO:0007744" key="20">
    <source>
        <dbReference type="PDB" id="7WN1"/>
    </source>
</evidence>
<evidence type="ECO:0007744" key="21">
    <source>
        <dbReference type="PDB" id="7YDQ"/>
    </source>
</evidence>
<evidence type="ECO:0007829" key="22">
    <source>
        <dbReference type="PDB" id="7WN1"/>
    </source>
</evidence>
<accession>Q8IDM6</accession>
<reference evidence="18" key="1">
    <citation type="journal article" date="2002" name="Nature">
        <title>Genome sequence of the human malaria parasite Plasmodium falciparum.</title>
        <authorList>
            <person name="Gardner M.J."/>
            <person name="Hall N."/>
            <person name="Fung E."/>
            <person name="White O."/>
            <person name="Berriman M."/>
            <person name="Hyman R.W."/>
            <person name="Carlton J.M."/>
            <person name="Pain A."/>
            <person name="Nelson K.E."/>
            <person name="Bowman S."/>
            <person name="Paulsen I.T."/>
            <person name="James K.D."/>
            <person name="Eisen J.A."/>
            <person name="Rutherford K.M."/>
            <person name="Salzberg S.L."/>
            <person name="Craig A."/>
            <person name="Kyes S."/>
            <person name="Chan M.-S."/>
            <person name="Nene V."/>
            <person name="Shallom S.J."/>
            <person name="Suh B."/>
            <person name="Peterson J."/>
            <person name="Angiuoli S."/>
            <person name="Pertea M."/>
            <person name="Allen J."/>
            <person name="Selengut J."/>
            <person name="Haft D."/>
            <person name="Mather M.W."/>
            <person name="Vaidya A.B."/>
            <person name="Martin D.M.A."/>
            <person name="Fairlamb A.H."/>
            <person name="Fraunholz M.J."/>
            <person name="Roos D.S."/>
            <person name="Ralph S.A."/>
            <person name="McFadden G.I."/>
            <person name="Cummings L.M."/>
            <person name="Subramanian G.M."/>
            <person name="Mungall C."/>
            <person name="Venter J.C."/>
            <person name="Carucci D.J."/>
            <person name="Hoffman S.L."/>
            <person name="Newbold C."/>
            <person name="Davis R.W."/>
            <person name="Fraser C.M."/>
            <person name="Barrell B.G."/>
        </authorList>
    </citation>
    <scope>NUCLEOTIDE SEQUENCE [LARGE SCALE GENOMIC DNA]</scope>
    <source>
        <strain evidence="18">3D7</strain>
    </source>
</reference>
<reference evidence="18" key="2">
    <citation type="journal article" date="2002" name="Nature">
        <title>Sequence of Plasmodium falciparum chromosomes 1, 3-9 and 13.</title>
        <authorList>
            <person name="Hall N."/>
            <person name="Pain A."/>
            <person name="Berriman M."/>
            <person name="Churcher C.M."/>
            <person name="Harris B."/>
            <person name="Harris D."/>
            <person name="Mungall K.L."/>
            <person name="Bowman S."/>
            <person name="Atkin R."/>
            <person name="Baker S."/>
            <person name="Barron A."/>
            <person name="Brooks K."/>
            <person name="Buckee C.O."/>
            <person name="Burrows C."/>
            <person name="Cherevach I."/>
            <person name="Chillingworth C."/>
            <person name="Chillingworth T."/>
            <person name="Christodoulou Z."/>
            <person name="Clark L."/>
            <person name="Clark R."/>
            <person name="Corton C."/>
            <person name="Cronin A."/>
            <person name="Davies R.M."/>
            <person name="Davis P."/>
            <person name="Dear P."/>
            <person name="Dearden F."/>
            <person name="Doggett J."/>
            <person name="Feltwell T."/>
            <person name="Goble A."/>
            <person name="Goodhead I."/>
            <person name="Gwilliam R."/>
            <person name="Hamlin N."/>
            <person name="Hance Z."/>
            <person name="Harper D."/>
            <person name="Hauser H."/>
            <person name="Hornsby T."/>
            <person name="Holroyd S."/>
            <person name="Horrocks P."/>
            <person name="Humphray S."/>
            <person name="Jagels K."/>
            <person name="James K.D."/>
            <person name="Johnson D."/>
            <person name="Kerhornou A."/>
            <person name="Knights A."/>
            <person name="Konfortov B."/>
            <person name="Kyes S."/>
            <person name="Larke N."/>
            <person name="Lawson D."/>
            <person name="Lennard N."/>
            <person name="Line A."/>
            <person name="Maddison M."/>
            <person name="Mclean J."/>
            <person name="Mooney P."/>
            <person name="Moule S."/>
            <person name="Murphy L."/>
            <person name="Oliver K."/>
            <person name="Ormond D."/>
            <person name="Price C."/>
            <person name="Quail M.A."/>
            <person name="Rabbinowitsch E."/>
            <person name="Rajandream M.A."/>
            <person name="Rutter S."/>
            <person name="Rutherford K.M."/>
            <person name="Sanders M."/>
            <person name="Simmonds M."/>
            <person name="Seeger K."/>
            <person name="Sharp S."/>
            <person name="Smith R."/>
            <person name="Squares R."/>
            <person name="Squares S."/>
            <person name="Stevens K."/>
            <person name="Taylor K."/>
            <person name="Tivey A."/>
            <person name="Unwin L."/>
            <person name="Whitehead S."/>
            <person name="Woodward J.R."/>
            <person name="Sulston J.E."/>
            <person name="Craig A."/>
            <person name="Newbold C."/>
            <person name="Barrell B.G."/>
        </authorList>
    </citation>
    <scope>NUCLEOTIDE SEQUENCE [LARGE SCALE GENOMIC DNA]</scope>
    <source>
        <strain evidence="18">3D7</strain>
    </source>
</reference>
<reference evidence="16" key="3">
    <citation type="journal article" date="2000" name="Biochem. J.">
        <title>Identification of a nucleoside/nucleobase transporter from Plasmodium falciparum, a novel target for anti-malarial chemotherapy.</title>
        <authorList>
            <person name="Parker M.D."/>
            <person name="Hyde R.J."/>
            <person name="Yao S.Y."/>
            <person name="McRobert L."/>
            <person name="Cass C.E."/>
            <person name="Young J.D."/>
            <person name="McConkey G.A."/>
            <person name="Baldwin S.A."/>
        </authorList>
    </citation>
    <scope>FUNCTION</scope>
    <scope>TRANSPORTER ACTIVITY</scope>
    <scope>BIOPHYSICOCHEMICAL PROPERTIES</scope>
</reference>
<reference evidence="16" key="4">
    <citation type="journal article" date="2000" name="J. Biol. Chem.">
        <title>Isolation and functional characterization of the PfNT1 nucleoside transporter gene from Plasmodium falciparum.</title>
        <authorList>
            <person name="Carter N.S."/>
            <person name="Ben Mamoun C."/>
            <person name="Liu W."/>
            <person name="Silva E.O."/>
            <person name="Landfear S.M."/>
            <person name="Goldberg D.E."/>
            <person name="Ullman B."/>
        </authorList>
    </citation>
    <scope>FUNCTION</scope>
    <scope>TRANSPORTER ACTIVITY</scope>
    <scope>ACTIVITY REGULATION</scope>
    <scope>BIOPHYSICOCHEMICAL PROPERTIES</scope>
    <scope>DEVELOPMENTAL STAGE</scope>
</reference>
<reference evidence="16" key="5">
    <citation type="journal article" date="2001" name="J. Biol. Chem.">
        <title>Localization of the Plasmodium falciparum PfNT1 nucleoside transporter to the parasite plasma membrane.</title>
        <authorList>
            <person name="Rager N."/>
            <person name="Mamoun C.B."/>
            <person name="Carter N.S."/>
            <person name="Goldberg D.E."/>
            <person name="Ullman B."/>
        </authorList>
    </citation>
    <scope>SUBCELLULAR LOCATION</scope>
    <scope>DEVELOPMENTAL STAGE</scope>
</reference>
<reference evidence="16" key="6">
    <citation type="journal article" date="2006" name="Proc. Natl. Acad. Sci. U.S.A.">
        <title>The plasma membrane permease PfNT1 is essential for purine salvage in the human malaria parasite Plasmodium falciparum.</title>
        <authorList>
            <person name="El Bissati K."/>
            <person name="Zufferey R."/>
            <person name="Witola W.H."/>
            <person name="Carter N.S."/>
            <person name="Ullman B."/>
            <person name="Ben Mamoun C."/>
        </authorList>
    </citation>
    <scope>FUNCTION</scope>
    <scope>TRANSPORTER ACTIVITY</scope>
    <scope>SUBCELLULAR LOCATION</scope>
    <scope>DISRUPTION PHENOTYPE</scope>
</reference>
<reference evidence="16" key="7">
    <citation type="journal article" date="2008" name="Mol. Biochem. Parasitol.">
        <title>Genetic evidence for the essential role of PfNT1 in the transport and utilization of xanthine, guanine, guanosine and adenine by Plasmodium falciparum.</title>
        <authorList>
            <person name="El Bissati K."/>
            <person name="Downie M.J."/>
            <person name="Kim S.K."/>
            <person name="Horowitz M."/>
            <person name="Carter N."/>
            <person name="Ullman B."/>
            <person name="Ben Mamoun C."/>
        </authorList>
    </citation>
    <scope>FUNCTION</scope>
    <scope>TRANSPORTER ACTIVITY</scope>
    <scope>DISRUPTION PHENOTYPE</scope>
</reference>
<reference key="8">
    <citation type="journal article" date="2015" name="ACS Chem. Biol.">
        <title>Yeast-based high-throughput screen identifies Plasmodium falciparum equilibrative nucleoside transporter 1 inhibitors that kill malaria parasites.</title>
        <authorList>
            <person name="Frame I.J."/>
            <person name="Deniskin R."/>
            <person name="Rinderspacher A."/>
            <person name="Katz F."/>
            <person name="Deng S.X."/>
            <person name="Moir R.D."/>
            <person name="Adjalley S.H."/>
            <person name="Coburn-Flynn O."/>
            <person name="Fidock D.A."/>
            <person name="Willis I.M."/>
            <person name="Landry D.W."/>
            <person name="Akabas M.H."/>
        </authorList>
    </citation>
    <scope>FUNCTION</scope>
    <scope>TRANSPORTER ACTIVITY</scope>
    <scope>ACTIVITY REGULATION</scope>
    <scope>DISRUPTION PHENOTYPE</scope>
</reference>
<reference key="9">
    <citation type="journal article" date="2020" name="ACS Infect. Dis.">
        <title>Impact of Field Isolate Identified Nonsynonymous Single Nucleotide Polymorphisms on Plasmodium falciparum Equilibrative Nucleoside Transporter 1 Inhibitor Efficacy.</title>
        <authorList>
            <person name="Sosa Y."/>
            <person name="Egbo D."/>
            <person name="Akabas M.H."/>
        </authorList>
    </citation>
    <scope>FUNCTION</scope>
    <scope>TRANSPORTER ACTIVITY</scope>
    <scope>VARIANTS SER-36; ILE-92; ILE-129; PHE-133; PHE-197; GLU-284; THR-317; ILE-345; SER-351; ILE-385; LEU-394 AND MET-418</scope>
</reference>
<reference key="10">
    <citation type="journal article" date="2023" name="PLoS ONE">
        <title>Putative purine nucleoside interacting residues in the malaria parasite purine uptake transporter PfENT1 are critical for transporter function.</title>
        <authorList>
            <person name="Dillague C."/>
            <person name="Akabas M.H."/>
        </authorList>
    </citation>
    <scope>FUNCTION</scope>
    <scope>TRANSPORTER ACTIVITY</scope>
    <scope>MUTAGENESIS OF SER-48; SER-49; LEU-50; ASN-51; VAL-52; TRP-53; ALA-134; GLN-135; THR-136; ILE-137; PHE-286; ASP-287; PHE-288; LEU-289; SER-290 AND ARG-291</scope>
</reference>
<reference evidence="19 20 21" key="11">
    <citation type="journal article" date="2023" name="Nat. Commun.">
        <title>Structural basis of the substrate recognition and inhibition mechanism of Plasmodium falciparum nucleoside transporter PfENT1.</title>
        <authorList>
            <person name="Wang C."/>
            <person name="Yu L."/>
            <person name="Zhang J."/>
            <person name="Zhou Y."/>
            <person name="Sun B."/>
            <person name="Xiao Q."/>
            <person name="Zhang M."/>
            <person name="Liu H."/>
            <person name="Li J."/>
            <person name="Li J."/>
            <person name="Luo Y."/>
            <person name="Xu J."/>
            <person name="Lian Z."/>
            <person name="Lin J."/>
            <person name="Wang X."/>
            <person name="Zhang P."/>
            <person name="Guo L."/>
            <person name="Ren R."/>
            <person name="Deng D."/>
        </authorList>
    </citation>
    <scope>X-RAY CRYSTALLOGRAPHY (3.11 ANGSTROMS) OF MUTANT ALA-190 WITH SYNTHETIC INHIBITOR; NANOBODY 19; NANOBODY 48 AND INOSINE</scope>
    <scope>FUNCTION</scope>
    <scope>TRANSPORTER ACTIVITY</scope>
    <scope>ACTIVITY REGULATION</scope>
    <scope>MUTAGENESIS OF SER-49; LEU-50; TRP-53; LEU-73; GLN-135; PHE-139; TYR-190; ASP-287; ARG-291 AND PHE-390</scope>
</reference>
<dbReference type="EMBL" id="AL844509">
    <property type="protein sequence ID" value="CAD52595.1"/>
    <property type="molecule type" value="Genomic_DNA"/>
</dbReference>
<dbReference type="RefSeq" id="XP_001350186.1">
    <property type="nucleotide sequence ID" value="XM_001350150.1"/>
</dbReference>
<dbReference type="PDB" id="7WN0">
    <property type="method" value="EM"/>
    <property type="resolution" value="3.64 A"/>
    <property type="chains" value="A=1-422"/>
</dbReference>
<dbReference type="PDB" id="7WN1">
    <property type="method" value="EM"/>
    <property type="resolution" value="3.11 A"/>
    <property type="chains" value="A=1-422"/>
</dbReference>
<dbReference type="PDB" id="7YDQ">
    <property type="method" value="EM"/>
    <property type="resolution" value="4.04 A"/>
    <property type="chains" value="A=1-370"/>
</dbReference>
<dbReference type="PDBsum" id="7WN0"/>
<dbReference type="PDBsum" id="7WN1"/>
<dbReference type="PDBsum" id="7YDQ"/>
<dbReference type="EMDB" id="EMD-33756"/>
<dbReference type="SMR" id="Q8IDM6"/>
<dbReference type="STRING" id="36329.Q8IDM6"/>
<dbReference type="SwissPalm" id="Q8IDM6"/>
<dbReference type="PaxDb" id="5833-PF13_0252"/>
<dbReference type="EnsemblProtists" id="CAD52595">
    <property type="protein sequence ID" value="CAD52595"/>
    <property type="gene ID" value="PF3D7_1347200"/>
</dbReference>
<dbReference type="GeneID" id="814217"/>
<dbReference type="KEGG" id="pfa:PF3D7_1347200"/>
<dbReference type="VEuPathDB" id="PlasmoDB:PF3D7_1347200"/>
<dbReference type="HOGENOM" id="CLU_661369_0_0_1"/>
<dbReference type="InParanoid" id="Q8IDM6"/>
<dbReference type="OMA" id="MGIWTTY"/>
<dbReference type="OrthoDB" id="46396at2759"/>
<dbReference type="PhylomeDB" id="Q8IDM6"/>
<dbReference type="Proteomes" id="UP000001450">
    <property type="component" value="Chromosome 13"/>
</dbReference>
<dbReference type="GO" id="GO:0005886">
    <property type="term" value="C:plasma membrane"/>
    <property type="evidence" value="ECO:0000318"/>
    <property type="project" value="GO_Central"/>
</dbReference>
<dbReference type="GO" id="GO:0005337">
    <property type="term" value="F:nucleoside transmembrane transporter activity"/>
    <property type="evidence" value="ECO:0000314"/>
    <property type="project" value="GeneDB"/>
</dbReference>
<dbReference type="GO" id="GO:0032238">
    <property type="term" value="P:adenosine transport"/>
    <property type="evidence" value="ECO:0000269"/>
    <property type="project" value="GeneDB"/>
</dbReference>
<dbReference type="GO" id="GO:0006863">
    <property type="term" value="P:purine nucleobase transport"/>
    <property type="evidence" value="ECO:0000269"/>
    <property type="project" value="GeneDB"/>
</dbReference>
<dbReference type="InterPro" id="IPR002259">
    <property type="entry name" value="Eqnu_transpt"/>
</dbReference>
<dbReference type="InterPro" id="IPR036259">
    <property type="entry name" value="MFS_trans_sf"/>
</dbReference>
<dbReference type="PANTHER" id="PTHR10332">
    <property type="entry name" value="EQUILIBRATIVE NUCLEOSIDE TRANSPORTER"/>
    <property type="match status" value="1"/>
</dbReference>
<dbReference type="PANTHER" id="PTHR10332:SF10">
    <property type="entry name" value="EQUILIBRATIVE NUCLEOSIDE TRANSPORTER 4"/>
    <property type="match status" value="1"/>
</dbReference>
<dbReference type="SUPFAM" id="SSF103473">
    <property type="entry name" value="MFS general substrate transporter"/>
    <property type="match status" value="1"/>
</dbReference>